<gene>
    <name type="primary">CGR1</name>
    <name type="ORF">FGRRES_07363</name>
    <name type="ORF">FGSG_07363</name>
</gene>
<name>CGR1_GIBZE</name>
<accession>Q4I5Z5</accession>
<accession>A0A0E0SAF2</accession>
<accession>V6RGA7</accession>
<sequence>MSDTENTNLTPAPAAEKTLGMRKNGKQWHAPKKAFRPTSGLKSYEKRSQERAIMIQVKAKEKEMKEEKEEERQRKVQAIKEKRAKKEEKERYEKMAEKMHKKRVERLKRKEKRNKLINS</sequence>
<proteinExistence type="inferred from homology"/>
<organism>
    <name type="scientific">Gibberella zeae (strain ATCC MYA-4620 / CBS 123657 / FGSC 9075 / NRRL 31084 / PH-1)</name>
    <name type="common">Wheat head blight fungus</name>
    <name type="synonym">Fusarium graminearum</name>
    <dbReference type="NCBI Taxonomy" id="229533"/>
    <lineage>
        <taxon>Eukaryota</taxon>
        <taxon>Fungi</taxon>
        <taxon>Dikarya</taxon>
        <taxon>Ascomycota</taxon>
        <taxon>Pezizomycotina</taxon>
        <taxon>Sordariomycetes</taxon>
        <taxon>Hypocreomycetidae</taxon>
        <taxon>Hypocreales</taxon>
        <taxon>Nectriaceae</taxon>
        <taxon>Fusarium</taxon>
    </lineage>
</organism>
<keyword id="KW-0175">Coiled coil</keyword>
<keyword id="KW-0539">Nucleus</keyword>
<keyword id="KW-1185">Reference proteome</keyword>
<keyword id="KW-0690">Ribosome biogenesis</keyword>
<keyword id="KW-0698">rRNA processing</keyword>
<evidence type="ECO:0000250" key="1"/>
<evidence type="ECO:0000255" key="2"/>
<evidence type="ECO:0000256" key="3">
    <source>
        <dbReference type="SAM" id="MobiDB-lite"/>
    </source>
</evidence>
<evidence type="ECO:0000305" key="4"/>
<feature type="chain" id="PRO_0000278956" description="rRNA-processing protein CGR1">
    <location>
        <begin position="1"/>
        <end position="119"/>
    </location>
</feature>
<feature type="region of interest" description="Disordered" evidence="3">
    <location>
        <begin position="1"/>
        <end position="46"/>
    </location>
</feature>
<feature type="region of interest" description="Disordered" evidence="3">
    <location>
        <begin position="60"/>
        <end position="119"/>
    </location>
</feature>
<feature type="coiled-coil region" evidence="2">
    <location>
        <begin position="49"/>
        <end position="106"/>
    </location>
</feature>
<feature type="compositionally biased region" description="Polar residues" evidence="3">
    <location>
        <begin position="1"/>
        <end position="10"/>
    </location>
</feature>
<feature type="compositionally biased region" description="Basic residues" evidence="3">
    <location>
        <begin position="23"/>
        <end position="35"/>
    </location>
</feature>
<feature type="compositionally biased region" description="Basic and acidic residues" evidence="3">
    <location>
        <begin position="60"/>
        <end position="98"/>
    </location>
</feature>
<feature type="compositionally biased region" description="Basic residues" evidence="3">
    <location>
        <begin position="99"/>
        <end position="119"/>
    </location>
</feature>
<dbReference type="EMBL" id="DS231666">
    <property type="protein sequence ID" value="ESU13618.1"/>
    <property type="molecule type" value="Genomic_DNA"/>
</dbReference>
<dbReference type="EMBL" id="HG970335">
    <property type="protein sequence ID" value="CEF83415.1"/>
    <property type="molecule type" value="Genomic_DNA"/>
</dbReference>
<dbReference type="RefSeq" id="XP_011327125.1">
    <property type="nucleotide sequence ID" value="XM_011328823.1"/>
</dbReference>
<dbReference type="SMR" id="Q4I5Z5"/>
<dbReference type="STRING" id="229533.Q4I5Z5"/>
<dbReference type="GeneID" id="23554442"/>
<dbReference type="KEGG" id="fgr:FGSG_07363"/>
<dbReference type="VEuPathDB" id="FungiDB:FGRAMPH1_01G24635"/>
<dbReference type="eggNOG" id="ENOG502S7VB">
    <property type="taxonomic scope" value="Eukaryota"/>
</dbReference>
<dbReference type="HOGENOM" id="CLU_125051_0_0_1"/>
<dbReference type="InParanoid" id="Q4I5Z5"/>
<dbReference type="OrthoDB" id="139857at110618"/>
<dbReference type="Proteomes" id="UP000070720">
    <property type="component" value="Chromosome 4"/>
</dbReference>
<dbReference type="GO" id="GO:0005730">
    <property type="term" value="C:nucleolus"/>
    <property type="evidence" value="ECO:0007669"/>
    <property type="project" value="UniProtKB-SubCell"/>
</dbReference>
<dbReference type="GO" id="GO:0006364">
    <property type="term" value="P:rRNA processing"/>
    <property type="evidence" value="ECO:0007669"/>
    <property type="project" value="UniProtKB-KW"/>
</dbReference>
<dbReference type="InterPro" id="IPR005579">
    <property type="entry name" value="Cgr1-like"/>
</dbReference>
<dbReference type="Pfam" id="PF03879">
    <property type="entry name" value="Cgr1"/>
    <property type="match status" value="1"/>
</dbReference>
<protein>
    <recommendedName>
        <fullName>rRNA-processing protein CGR1</fullName>
    </recommendedName>
</protein>
<comment type="function">
    <text evidence="1">Involved in nucleolar integrity and required for processing of the pre-rRNA for the 60S ribosome subunit.</text>
</comment>
<comment type="subcellular location">
    <subcellularLocation>
        <location evidence="1">Nucleus</location>
        <location evidence="1">Nucleolus</location>
    </subcellularLocation>
</comment>
<comment type="similarity">
    <text evidence="4">Belongs to the CGR1 family.</text>
</comment>
<reference key="1">
    <citation type="journal article" date="2007" name="Science">
        <title>The Fusarium graminearum genome reveals a link between localized polymorphism and pathogen specialization.</title>
        <authorList>
            <person name="Cuomo C.A."/>
            <person name="Gueldener U."/>
            <person name="Xu J.-R."/>
            <person name="Trail F."/>
            <person name="Turgeon B.G."/>
            <person name="Di Pietro A."/>
            <person name="Walton J.D."/>
            <person name="Ma L.-J."/>
            <person name="Baker S.E."/>
            <person name="Rep M."/>
            <person name="Adam G."/>
            <person name="Antoniw J."/>
            <person name="Baldwin T."/>
            <person name="Calvo S.E."/>
            <person name="Chang Y.-L."/>
            <person name="DeCaprio D."/>
            <person name="Gale L.R."/>
            <person name="Gnerre S."/>
            <person name="Goswami R.S."/>
            <person name="Hammond-Kosack K."/>
            <person name="Harris L.J."/>
            <person name="Hilburn K."/>
            <person name="Kennell J.C."/>
            <person name="Kroken S."/>
            <person name="Magnuson J.K."/>
            <person name="Mannhaupt G."/>
            <person name="Mauceli E.W."/>
            <person name="Mewes H.-W."/>
            <person name="Mitterbauer R."/>
            <person name="Muehlbauer G."/>
            <person name="Muensterkoetter M."/>
            <person name="Nelson D."/>
            <person name="O'Donnell K."/>
            <person name="Ouellet T."/>
            <person name="Qi W."/>
            <person name="Quesneville H."/>
            <person name="Roncero M.I.G."/>
            <person name="Seong K.-Y."/>
            <person name="Tetko I.V."/>
            <person name="Urban M."/>
            <person name="Waalwijk C."/>
            <person name="Ward T.J."/>
            <person name="Yao J."/>
            <person name="Birren B.W."/>
            <person name="Kistler H.C."/>
        </authorList>
    </citation>
    <scope>NUCLEOTIDE SEQUENCE [LARGE SCALE GENOMIC DNA]</scope>
    <source>
        <strain>ATCC MYA-4620 / CBS 123657 / FGSC 9075 / NRRL 31084 / PH-1</strain>
    </source>
</reference>
<reference key="2">
    <citation type="journal article" date="2010" name="Nature">
        <title>Comparative genomics reveals mobile pathogenicity chromosomes in Fusarium.</title>
        <authorList>
            <person name="Ma L.-J."/>
            <person name="van der Does H.C."/>
            <person name="Borkovich K.A."/>
            <person name="Coleman J.J."/>
            <person name="Daboussi M.-J."/>
            <person name="Di Pietro A."/>
            <person name="Dufresne M."/>
            <person name="Freitag M."/>
            <person name="Grabherr M."/>
            <person name="Henrissat B."/>
            <person name="Houterman P.M."/>
            <person name="Kang S."/>
            <person name="Shim W.-B."/>
            <person name="Woloshuk C."/>
            <person name="Xie X."/>
            <person name="Xu J.-R."/>
            <person name="Antoniw J."/>
            <person name="Baker S.E."/>
            <person name="Bluhm B.H."/>
            <person name="Breakspear A."/>
            <person name="Brown D.W."/>
            <person name="Butchko R.A.E."/>
            <person name="Chapman S."/>
            <person name="Coulson R."/>
            <person name="Coutinho P.M."/>
            <person name="Danchin E.G.J."/>
            <person name="Diener A."/>
            <person name="Gale L.R."/>
            <person name="Gardiner D.M."/>
            <person name="Goff S."/>
            <person name="Hammond-Kosack K.E."/>
            <person name="Hilburn K."/>
            <person name="Hua-Van A."/>
            <person name="Jonkers W."/>
            <person name="Kazan K."/>
            <person name="Kodira C.D."/>
            <person name="Koehrsen M."/>
            <person name="Kumar L."/>
            <person name="Lee Y.-H."/>
            <person name="Li L."/>
            <person name="Manners J.M."/>
            <person name="Miranda-Saavedra D."/>
            <person name="Mukherjee M."/>
            <person name="Park G."/>
            <person name="Park J."/>
            <person name="Park S.-Y."/>
            <person name="Proctor R.H."/>
            <person name="Regev A."/>
            <person name="Ruiz-Roldan M.C."/>
            <person name="Sain D."/>
            <person name="Sakthikumar S."/>
            <person name="Sykes S."/>
            <person name="Schwartz D.C."/>
            <person name="Turgeon B.G."/>
            <person name="Wapinski I."/>
            <person name="Yoder O."/>
            <person name="Young S."/>
            <person name="Zeng Q."/>
            <person name="Zhou S."/>
            <person name="Galagan J."/>
            <person name="Cuomo C.A."/>
            <person name="Kistler H.C."/>
            <person name="Rep M."/>
        </authorList>
    </citation>
    <scope>GENOME REANNOTATION</scope>
    <source>
        <strain>ATCC MYA-4620 / CBS 123657 / FGSC 9075 / NRRL 31084 / PH-1</strain>
    </source>
</reference>
<reference key="3">
    <citation type="journal article" date="2015" name="BMC Genomics">
        <title>The completed genome sequence of the pathogenic ascomycete fungus Fusarium graminearum.</title>
        <authorList>
            <person name="King R."/>
            <person name="Urban M."/>
            <person name="Hammond-Kosack M.C.U."/>
            <person name="Hassani-Pak K."/>
            <person name="Hammond-Kosack K.E."/>
        </authorList>
    </citation>
    <scope>NUCLEOTIDE SEQUENCE [LARGE SCALE GENOMIC DNA]</scope>
    <source>
        <strain>ATCC MYA-4620 / CBS 123657 / FGSC 9075 / NRRL 31084 / PH-1</strain>
    </source>
</reference>